<feature type="chain" id="PRO_0000422794" description="Transcriptional adapter 2">
    <location>
        <begin position="1"/>
        <end position="445"/>
    </location>
</feature>
<feature type="domain" description="SANT" evidence="4">
    <location>
        <begin position="63"/>
        <end position="115"/>
    </location>
</feature>
<feature type="domain" description="SWIRM" evidence="3">
    <location>
        <begin position="357"/>
        <end position="445"/>
    </location>
</feature>
<feature type="zinc finger region" description="ZZ-type" evidence="2">
    <location>
        <begin position="5"/>
        <end position="61"/>
    </location>
</feature>
<feature type="region of interest" description="Disordered" evidence="5">
    <location>
        <begin position="319"/>
        <end position="360"/>
    </location>
</feature>
<feature type="compositionally biased region" description="Polar residues" evidence="5">
    <location>
        <begin position="326"/>
        <end position="344"/>
    </location>
</feature>
<feature type="binding site" evidence="2">
    <location>
        <position position="10"/>
    </location>
    <ligand>
        <name>Zn(2+)</name>
        <dbReference type="ChEBI" id="CHEBI:29105"/>
        <label>1</label>
    </ligand>
</feature>
<feature type="binding site" evidence="2">
    <location>
        <position position="13"/>
    </location>
    <ligand>
        <name>Zn(2+)</name>
        <dbReference type="ChEBI" id="CHEBI:29105"/>
        <label>1</label>
    </ligand>
</feature>
<feature type="binding site" evidence="2">
    <location>
        <position position="25"/>
    </location>
    <ligand>
        <name>Zn(2+)</name>
        <dbReference type="ChEBI" id="CHEBI:29105"/>
        <label>2</label>
    </ligand>
</feature>
<feature type="binding site" evidence="2">
    <location>
        <position position="28"/>
    </location>
    <ligand>
        <name>Zn(2+)</name>
        <dbReference type="ChEBI" id="CHEBI:29105"/>
        <label>2</label>
    </ligand>
</feature>
<feature type="binding site" evidence="2">
    <location>
        <position position="34"/>
    </location>
    <ligand>
        <name>Zn(2+)</name>
        <dbReference type="ChEBI" id="CHEBI:29105"/>
        <label>1</label>
    </ligand>
</feature>
<feature type="binding site" evidence="2">
    <location>
        <position position="37"/>
    </location>
    <ligand>
        <name>Zn(2+)</name>
        <dbReference type="ChEBI" id="CHEBI:29105"/>
        <label>1</label>
    </ligand>
</feature>
<feature type="binding site" evidence="2">
    <location>
        <position position="47"/>
    </location>
    <ligand>
        <name>Zn(2+)</name>
        <dbReference type="ChEBI" id="CHEBI:29105"/>
        <label>2</label>
    </ligand>
</feature>
<feature type="binding site" evidence="2">
    <location>
        <position position="51"/>
    </location>
    <ligand>
        <name>Zn(2+)</name>
        <dbReference type="ChEBI" id="CHEBI:29105"/>
        <label>2</label>
    </ligand>
</feature>
<reference key="1">
    <citation type="journal article" date="2004" name="Proc. Natl. Acad. Sci. U.S.A.">
        <title>The diploid genome sequence of Candida albicans.</title>
        <authorList>
            <person name="Jones T."/>
            <person name="Federspiel N.A."/>
            <person name="Chibana H."/>
            <person name="Dungan J."/>
            <person name="Kalman S."/>
            <person name="Magee B.B."/>
            <person name="Newport G."/>
            <person name="Thorstenson Y.R."/>
            <person name="Agabian N."/>
            <person name="Magee P.T."/>
            <person name="Davis R.W."/>
            <person name="Scherer S."/>
        </authorList>
    </citation>
    <scope>NUCLEOTIDE SEQUENCE [LARGE SCALE GENOMIC DNA]</scope>
    <source>
        <strain>SC5314 / ATCC MYA-2876</strain>
    </source>
</reference>
<reference key="2">
    <citation type="journal article" date="2007" name="Genome Biol.">
        <title>Assembly of the Candida albicans genome into sixteen supercontigs aligned on the eight chromosomes.</title>
        <authorList>
            <person name="van het Hoog M."/>
            <person name="Rast T.J."/>
            <person name="Martchenko M."/>
            <person name="Grindle S."/>
            <person name="Dignard D."/>
            <person name="Hogues H."/>
            <person name="Cuomo C."/>
            <person name="Berriman M."/>
            <person name="Scherer S."/>
            <person name="Magee B.B."/>
            <person name="Whiteway M."/>
            <person name="Chibana H."/>
            <person name="Nantel A."/>
            <person name="Magee P.T."/>
        </authorList>
    </citation>
    <scope>GENOME REANNOTATION</scope>
    <source>
        <strain>SC5314 / ATCC MYA-2876</strain>
    </source>
</reference>
<reference key="3">
    <citation type="journal article" date="2013" name="Genome Biol.">
        <title>Assembly of a phased diploid Candida albicans genome facilitates allele-specific measurements and provides a simple model for repeat and indel structure.</title>
        <authorList>
            <person name="Muzzey D."/>
            <person name="Schwartz K."/>
            <person name="Weissman J.S."/>
            <person name="Sherlock G."/>
        </authorList>
    </citation>
    <scope>NUCLEOTIDE SEQUENCE [LARGE SCALE GENOMIC DNA]</scope>
    <scope>GENOME REANNOTATION</scope>
    <source>
        <strain>SC5314 / ATCC MYA-2876</strain>
    </source>
</reference>
<reference key="4">
    <citation type="journal article" date="2006" name="PLoS Pathog.">
        <title>Control of the C. albicans cell wall damage response by transcriptional regulator Cas5.</title>
        <authorList>
            <person name="Bruno V.M."/>
            <person name="Kalachikov S."/>
            <person name="Subaran R."/>
            <person name="Nobile C.J."/>
            <person name="Kyratsous C."/>
            <person name="Mitchell A.P."/>
        </authorList>
    </citation>
    <scope>FUNCTION</scope>
</reference>
<reference key="5">
    <citation type="journal article" date="2009" name="Eukaryot. Cell">
        <title>Candida albicans hyphal formation and virulence assessed using a Caenorhabditis elegans infection model.</title>
        <authorList>
            <person name="Pukkila-Worley R."/>
            <person name="Peleg A.Y."/>
            <person name="Tampakakis E."/>
            <person name="Mylonakis E."/>
        </authorList>
    </citation>
    <scope>FUNCTION</scope>
</reference>
<reference key="6">
    <citation type="journal article" date="2009" name="Mol. Biol. Cell">
        <title>Genome-wide mapping of the coactivator Ada2p yields insight into the functional roles of SAGA/ADA complex in Candida albicans.</title>
        <authorList>
            <person name="Sellam A."/>
            <person name="Askew C."/>
            <person name="Epp E."/>
            <person name="Lavoie H."/>
            <person name="Whiteway M."/>
            <person name="Nantel A."/>
        </authorList>
    </citation>
    <scope>FUNCTION</scope>
</reference>
<reference key="7">
    <citation type="journal article" date="2012" name="PLoS Pathog.">
        <title>Portrait of Candida albicans adherence regulators.</title>
        <authorList>
            <person name="Finkel J.S."/>
            <person name="Xu W."/>
            <person name="Huang D."/>
            <person name="Hill E.M."/>
            <person name="Desai J.V."/>
            <person name="Woolford C.A."/>
            <person name="Nett J.E."/>
            <person name="Taff H."/>
            <person name="Norice C.T."/>
            <person name="Andes D.R."/>
            <person name="Lanni F."/>
            <person name="Mitchell A.P."/>
        </authorList>
    </citation>
    <scope>FUNCTION</scope>
</reference>
<sequence length="445" mass="51110">MDSRTKLFHCDVCSSDCTNRIRIQCAICTDYDLCVPCFAAGLTTGDHKPWHDYQIIEQNTYPIFDRDWGADEELLLIQGCETSGLGNWADIADHIGNRSKEEVAEHYFKIYLESKDYPLPEMNKDFTDVSPLQFLEERKERLEKRKNIPLPPPRGKPVASVPLCHEIQGYMPGRLEFDHEAENEAEIPIKDMVFDPEDSANDIDLKLTILDIYNSRLTTRAERKRVMILNHLLDYRKNIGSDKRKSKEEKDLLKKINAFIRILTPEDFESFSRDLLTELKCRMKIQQLQTWRRNGITTLEDGAKFEKDKVIRAAHYQRMGNGTGSGRHSQTPGLTNGNSFNGNGHRNKFSPQPEFRSKSTTARAPLDISHAADFELLSAEEKQLCATLRILPKPYLAIKNQLMREAVKNNGVLKKKDARQALKIDVNKASKIYEFFVHMGWCSQG</sequence>
<organism>
    <name type="scientific">Candida albicans (strain SC5314 / ATCC MYA-2876)</name>
    <name type="common">Yeast</name>
    <dbReference type="NCBI Taxonomy" id="237561"/>
    <lineage>
        <taxon>Eukaryota</taxon>
        <taxon>Fungi</taxon>
        <taxon>Dikarya</taxon>
        <taxon>Ascomycota</taxon>
        <taxon>Saccharomycotina</taxon>
        <taxon>Pichiomycetes</taxon>
        <taxon>Debaryomycetaceae</taxon>
        <taxon>Candida/Lodderomyces clade</taxon>
        <taxon>Candida</taxon>
    </lineage>
</organism>
<evidence type="ECO:0000250" key="1"/>
<evidence type="ECO:0000255" key="2">
    <source>
        <dbReference type="PROSITE-ProRule" id="PRU00228"/>
    </source>
</evidence>
<evidence type="ECO:0000255" key="3">
    <source>
        <dbReference type="PROSITE-ProRule" id="PRU00247"/>
    </source>
</evidence>
<evidence type="ECO:0000255" key="4">
    <source>
        <dbReference type="PROSITE-ProRule" id="PRU00624"/>
    </source>
</evidence>
<evidence type="ECO:0000256" key="5">
    <source>
        <dbReference type="SAM" id="MobiDB-lite"/>
    </source>
</evidence>
<evidence type="ECO:0000269" key="6">
    <source>
    </source>
</evidence>
<evidence type="ECO:0000269" key="7">
    <source>
    </source>
</evidence>
<evidence type="ECO:0000269" key="8">
    <source>
    </source>
</evidence>
<evidence type="ECO:0000269" key="9">
    <source>
    </source>
</evidence>
<gene>
    <name type="primary">ADA2</name>
    <name type="ordered locus">CAALFM_C110860CA</name>
    <name type="ORF">CaO19.2331</name>
    <name type="ORF">CaO19.9867</name>
</gene>
<name>ADA2_CANAL</name>
<accession>Q59WH0</accession>
<accession>A0A1D8PEY3</accession>
<keyword id="KW-0130">Cell adhesion</keyword>
<keyword id="KW-0961">Cell wall biogenesis/degradation</keyword>
<keyword id="KW-0479">Metal-binding</keyword>
<keyword id="KW-0539">Nucleus</keyword>
<keyword id="KW-1185">Reference proteome</keyword>
<keyword id="KW-0804">Transcription</keyword>
<keyword id="KW-0805">Transcription regulation</keyword>
<keyword id="KW-0843">Virulence</keyword>
<keyword id="KW-0862">Zinc</keyword>
<keyword id="KW-0863">Zinc-finger</keyword>
<dbReference type="EMBL" id="CP017623">
    <property type="protein sequence ID" value="AOW26713.1"/>
    <property type="molecule type" value="Genomic_DNA"/>
</dbReference>
<dbReference type="RefSeq" id="XP_713936.2">
    <property type="nucleotide sequence ID" value="XM_708843.2"/>
</dbReference>
<dbReference type="SMR" id="Q59WH0"/>
<dbReference type="BioGRID" id="1227479">
    <property type="interactions" value="1"/>
</dbReference>
<dbReference type="FunCoup" id="Q59WH0">
    <property type="interactions" value="687"/>
</dbReference>
<dbReference type="STRING" id="237561.Q59WH0"/>
<dbReference type="EnsemblFungi" id="C1_10860C_A-T">
    <property type="protein sequence ID" value="C1_10860C_A-T-p1"/>
    <property type="gene ID" value="C1_10860C_A"/>
</dbReference>
<dbReference type="GeneID" id="3644450"/>
<dbReference type="KEGG" id="cal:CAALFM_C110860CA"/>
<dbReference type="CGD" id="CAL0000192402">
    <property type="gene designation" value="ADA2"/>
</dbReference>
<dbReference type="VEuPathDB" id="FungiDB:C1_10860C_A"/>
<dbReference type="eggNOG" id="KOG0457">
    <property type="taxonomic scope" value="Eukaryota"/>
</dbReference>
<dbReference type="HOGENOM" id="CLU_018273_3_0_1"/>
<dbReference type="InParanoid" id="Q59WH0"/>
<dbReference type="OMA" id="YNGNHRP"/>
<dbReference type="OrthoDB" id="270417at2759"/>
<dbReference type="PRO" id="PR:Q59WH0"/>
<dbReference type="Proteomes" id="UP000000559">
    <property type="component" value="Chromosome 1"/>
</dbReference>
<dbReference type="GO" id="GO:0140671">
    <property type="term" value="C:ADA complex"/>
    <property type="evidence" value="ECO:0007669"/>
    <property type="project" value="EnsemblFungi"/>
</dbReference>
<dbReference type="GO" id="GO:0000781">
    <property type="term" value="C:chromosome, telomeric region"/>
    <property type="evidence" value="ECO:0007669"/>
    <property type="project" value="GOC"/>
</dbReference>
<dbReference type="GO" id="GO:0005634">
    <property type="term" value="C:nucleus"/>
    <property type="evidence" value="ECO:0000318"/>
    <property type="project" value="GO_Central"/>
</dbReference>
<dbReference type="GO" id="GO:0000124">
    <property type="term" value="C:SAGA complex"/>
    <property type="evidence" value="ECO:0007669"/>
    <property type="project" value="EnsemblFungi"/>
</dbReference>
<dbReference type="GO" id="GO:0070461">
    <property type="term" value="C:SAGA-type complex"/>
    <property type="evidence" value="ECO:0000318"/>
    <property type="project" value="GO_Central"/>
</dbReference>
<dbReference type="GO" id="GO:0046695">
    <property type="term" value="C:SLIK (SAGA-like) complex"/>
    <property type="evidence" value="ECO:0007669"/>
    <property type="project" value="EnsemblFungi"/>
</dbReference>
<dbReference type="GO" id="GO:0003682">
    <property type="term" value="F:chromatin binding"/>
    <property type="evidence" value="ECO:0000318"/>
    <property type="project" value="GO_Central"/>
</dbReference>
<dbReference type="GO" id="GO:0001786">
    <property type="term" value="F:phosphatidylserine binding"/>
    <property type="evidence" value="ECO:0007669"/>
    <property type="project" value="EnsemblFungi"/>
</dbReference>
<dbReference type="GO" id="GO:0043565">
    <property type="term" value="F:sequence-specific DNA binding"/>
    <property type="evidence" value="ECO:0000314"/>
    <property type="project" value="CGD"/>
</dbReference>
<dbReference type="GO" id="GO:0003713">
    <property type="term" value="F:transcription coactivator activity"/>
    <property type="evidence" value="ECO:0000318"/>
    <property type="project" value="GO_Central"/>
</dbReference>
<dbReference type="GO" id="GO:0008270">
    <property type="term" value="F:zinc ion binding"/>
    <property type="evidence" value="ECO:0007669"/>
    <property type="project" value="UniProtKB-KW"/>
</dbReference>
<dbReference type="GO" id="GO:0043709">
    <property type="term" value="P:cell adhesion involved in single-species biofilm formation"/>
    <property type="evidence" value="ECO:0000315"/>
    <property type="project" value="CGD"/>
</dbReference>
<dbReference type="GO" id="GO:0071470">
    <property type="term" value="P:cellular response to osmotic stress"/>
    <property type="evidence" value="ECO:0007669"/>
    <property type="project" value="EnsemblFungi"/>
</dbReference>
<dbReference type="GO" id="GO:0006338">
    <property type="term" value="P:chromatin remodeling"/>
    <property type="evidence" value="ECO:0000318"/>
    <property type="project" value="GO_Central"/>
</dbReference>
<dbReference type="GO" id="GO:0044114">
    <property type="term" value="P:development of symbiont in host"/>
    <property type="evidence" value="ECO:0000315"/>
    <property type="project" value="CGD"/>
</dbReference>
<dbReference type="GO" id="GO:0030447">
    <property type="term" value="P:filamentous growth"/>
    <property type="evidence" value="ECO:0000315"/>
    <property type="project" value="CGD"/>
</dbReference>
<dbReference type="GO" id="GO:0044182">
    <property type="term" value="P:filamentous growth of a population of unicellular organisms"/>
    <property type="evidence" value="ECO:0000315"/>
    <property type="project" value="CGD"/>
</dbReference>
<dbReference type="GO" id="GO:0031505">
    <property type="term" value="P:fungal-type cell wall organization"/>
    <property type="evidence" value="ECO:0000315"/>
    <property type="project" value="CGD"/>
</dbReference>
<dbReference type="GO" id="GO:1900189">
    <property type="term" value="P:positive regulation of cell adhesion involved in single-species biofilm formation"/>
    <property type="evidence" value="ECO:0000315"/>
    <property type="project" value="CGD"/>
</dbReference>
<dbReference type="GO" id="GO:0010811">
    <property type="term" value="P:positive regulation of cell-substrate adhesion"/>
    <property type="evidence" value="ECO:0000315"/>
    <property type="project" value="CGD"/>
</dbReference>
<dbReference type="GO" id="GO:0000183">
    <property type="term" value="P:rDNA heterochromatin formation"/>
    <property type="evidence" value="ECO:0007669"/>
    <property type="project" value="EnsemblFungi"/>
</dbReference>
<dbReference type="GO" id="GO:0010520">
    <property type="term" value="P:regulation of reciprocal meiotic recombination"/>
    <property type="evidence" value="ECO:0007669"/>
    <property type="project" value="EnsemblFungi"/>
</dbReference>
<dbReference type="GO" id="GO:0006357">
    <property type="term" value="P:regulation of transcription by RNA polymerase II"/>
    <property type="evidence" value="ECO:0000315"/>
    <property type="project" value="CGD"/>
</dbReference>
<dbReference type="GO" id="GO:1990414">
    <property type="term" value="P:replication-born double-strand break repair via sister chromatid exchange"/>
    <property type="evidence" value="ECO:0007669"/>
    <property type="project" value="EnsemblFungi"/>
</dbReference>
<dbReference type="GO" id="GO:0031509">
    <property type="term" value="P:subtelomeric heterochromatin formation"/>
    <property type="evidence" value="ECO:0007669"/>
    <property type="project" value="EnsemblFungi"/>
</dbReference>
<dbReference type="CDD" id="cd00167">
    <property type="entry name" value="SANT"/>
    <property type="match status" value="1"/>
</dbReference>
<dbReference type="CDD" id="cd02335">
    <property type="entry name" value="ZZ_ADA2"/>
    <property type="match status" value="1"/>
</dbReference>
<dbReference type="FunFam" id="1.10.10.10:FF:000087">
    <property type="entry name" value="Transcriptional adapter 2"/>
    <property type="match status" value="1"/>
</dbReference>
<dbReference type="FunFam" id="1.10.10.60:FF:000115">
    <property type="entry name" value="Transcriptional adapter 2"/>
    <property type="match status" value="1"/>
</dbReference>
<dbReference type="FunFam" id="3.30.60.90:FF:000008">
    <property type="entry name" value="Transcriptional adapter 2"/>
    <property type="match status" value="1"/>
</dbReference>
<dbReference type="Gene3D" id="3.30.60.90">
    <property type="match status" value="1"/>
</dbReference>
<dbReference type="Gene3D" id="1.10.10.60">
    <property type="entry name" value="Homeodomain-like"/>
    <property type="match status" value="1"/>
</dbReference>
<dbReference type="Gene3D" id="1.10.10.10">
    <property type="entry name" value="Winged helix-like DNA-binding domain superfamily/Winged helix DNA-binding domain"/>
    <property type="match status" value="1"/>
</dbReference>
<dbReference type="InterPro" id="IPR041983">
    <property type="entry name" value="ADA2-like_ZZ"/>
</dbReference>
<dbReference type="InterPro" id="IPR016827">
    <property type="entry name" value="Ada2/TADA2"/>
</dbReference>
<dbReference type="InterPro" id="IPR009057">
    <property type="entry name" value="Homeodomain-like_sf"/>
</dbReference>
<dbReference type="InterPro" id="IPR001005">
    <property type="entry name" value="SANT/Myb"/>
</dbReference>
<dbReference type="InterPro" id="IPR017884">
    <property type="entry name" value="SANT_dom"/>
</dbReference>
<dbReference type="InterPro" id="IPR007526">
    <property type="entry name" value="SWIRM"/>
</dbReference>
<dbReference type="InterPro" id="IPR055141">
    <property type="entry name" value="TADA2A_B-like_dom"/>
</dbReference>
<dbReference type="InterPro" id="IPR036388">
    <property type="entry name" value="WH-like_DNA-bd_sf"/>
</dbReference>
<dbReference type="InterPro" id="IPR000433">
    <property type="entry name" value="Znf_ZZ"/>
</dbReference>
<dbReference type="InterPro" id="IPR043145">
    <property type="entry name" value="Znf_ZZ_sf"/>
</dbReference>
<dbReference type="PANTHER" id="PTHR12374:SF20">
    <property type="entry name" value="TRANSCRIPTIONAL ADAPTER 2-ALPHA"/>
    <property type="match status" value="1"/>
</dbReference>
<dbReference type="PANTHER" id="PTHR12374">
    <property type="entry name" value="TRANSCRIPTIONAL ADAPTOR 2 ADA2 -RELATED"/>
    <property type="match status" value="1"/>
</dbReference>
<dbReference type="Pfam" id="PF00249">
    <property type="entry name" value="Myb_DNA-binding"/>
    <property type="match status" value="1"/>
</dbReference>
<dbReference type="Pfam" id="PF04433">
    <property type="entry name" value="SWIRM"/>
    <property type="match status" value="1"/>
</dbReference>
<dbReference type="Pfam" id="PF22941">
    <property type="entry name" value="TADA2A-like_3rd"/>
    <property type="match status" value="1"/>
</dbReference>
<dbReference type="Pfam" id="PF00569">
    <property type="entry name" value="ZZ"/>
    <property type="match status" value="1"/>
</dbReference>
<dbReference type="PIRSF" id="PIRSF025024">
    <property type="entry name" value="Transcriptional_adaptor_2"/>
    <property type="match status" value="1"/>
</dbReference>
<dbReference type="SMART" id="SM00717">
    <property type="entry name" value="SANT"/>
    <property type="match status" value="1"/>
</dbReference>
<dbReference type="SMART" id="SM00291">
    <property type="entry name" value="ZnF_ZZ"/>
    <property type="match status" value="1"/>
</dbReference>
<dbReference type="SUPFAM" id="SSF46689">
    <property type="entry name" value="Homeodomain-like"/>
    <property type="match status" value="2"/>
</dbReference>
<dbReference type="SUPFAM" id="SSF57850">
    <property type="entry name" value="RING/U-box"/>
    <property type="match status" value="1"/>
</dbReference>
<dbReference type="PROSITE" id="PS51293">
    <property type="entry name" value="SANT"/>
    <property type="match status" value="1"/>
</dbReference>
<dbReference type="PROSITE" id="PS50934">
    <property type="entry name" value="SWIRM"/>
    <property type="match status" value="1"/>
</dbReference>
<dbReference type="PROSITE" id="PS01357">
    <property type="entry name" value="ZF_ZZ_1"/>
    <property type="match status" value="1"/>
</dbReference>
<dbReference type="PROSITE" id="PS50135">
    <property type="entry name" value="ZF_ZZ_2"/>
    <property type="match status" value="1"/>
</dbReference>
<protein>
    <recommendedName>
        <fullName>Transcriptional adapter 2</fullName>
    </recommendedName>
</protein>
<comment type="function">
    <text evidence="6 7 8 9">Functions as a component of the transcription regulatory histone acetylation (HAT) complexes SAGA, SALSA and ADA. SAGA is involved in RNA polymerase II-dependent transcriptional regulation of approximately 10% of yeast genes. At the promoters, SAGA is required for recruitment of the basal transcription machinery. SAGA acetylates nucleosomal histone H3 to some extent (to form H3K9ac, H3K14ac, H3K18ac and H3K23ac). SAGA interacts with DNA via upstream activating sequences (UASs). SALSA, an altered form of SAGA, may be involved in positive transcriptional regulation. ADA preferentially acetylates nucleosomal histones H3 (to form H3K14ac and H3K18ac) and H2B. Required for expression of many CAS5-dependent genes. Plays a key role in cell wall integrity, cell adhesion, hyphal development and pathogenesis.</text>
</comment>
<comment type="subunit">
    <text evidence="1">Component of SAGA complex, SALSA complex, and ADA complex.</text>
</comment>
<comment type="subcellular location">
    <subcellularLocation>
        <location evidence="4">Nucleus</location>
    </subcellularLocation>
</comment>
<proteinExistence type="inferred from homology"/>